<reference key="1">
    <citation type="journal article" date="2009" name="J. Bacteriol.">
        <title>Complete genome sequence of Haemophilus parasuis SH0165.</title>
        <authorList>
            <person name="Yue M."/>
            <person name="Yang F."/>
            <person name="Yang J."/>
            <person name="Bei W."/>
            <person name="Cai X."/>
            <person name="Chen L."/>
            <person name="Dong J."/>
            <person name="Zhou R."/>
            <person name="Jin M."/>
            <person name="Jin Q."/>
            <person name="Chen H."/>
        </authorList>
    </citation>
    <scope>NUCLEOTIDE SEQUENCE [LARGE SCALE GENOMIC DNA]</scope>
    <source>
        <strain>SH0165</strain>
    </source>
</reference>
<proteinExistence type="inferred from homology"/>
<name>HEM1_GLAP5</name>
<accession>B8F4X6</accession>
<protein>
    <recommendedName>
        <fullName evidence="1">Glutamyl-tRNA reductase</fullName>
        <shortName evidence="1">GluTR</shortName>
        <ecNumber evidence="1">1.2.1.70</ecNumber>
    </recommendedName>
</protein>
<evidence type="ECO:0000255" key="1">
    <source>
        <dbReference type="HAMAP-Rule" id="MF_00087"/>
    </source>
</evidence>
<organism>
    <name type="scientific">Glaesserella parasuis serovar 5 (strain SH0165)</name>
    <name type="common">Haemophilus parasuis</name>
    <dbReference type="NCBI Taxonomy" id="557723"/>
    <lineage>
        <taxon>Bacteria</taxon>
        <taxon>Pseudomonadati</taxon>
        <taxon>Pseudomonadota</taxon>
        <taxon>Gammaproteobacteria</taxon>
        <taxon>Pasteurellales</taxon>
        <taxon>Pasteurellaceae</taxon>
        <taxon>Glaesserella</taxon>
    </lineage>
</organism>
<comment type="function">
    <text evidence="1">Catalyzes the NADPH-dependent reduction of glutamyl-tRNA(Glu) to glutamate 1-semialdehyde (GSA).</text>
</comment>
<comment type="catalytic activity">
    <reaction evidence="1">
        <text>(S)-4-amino-5-oxopentanoate + tRNA(Glu) + NADP(+) = L-glutamyl-tRNA(Glu) + NADPH + H(+)</text>
        <dbReference type="Rhea" id="RHEA:12344"/>
        <dbReference type="Rhea" id="RHEA-COMP:9663"/>
        <dbReference type="Rhea" id="RHEA-COMP:9680"/>
        <dbReference type="ChEBI" id="CHEBI:15378"/>
        <dbReference type="ChEBI" id="CHEBI:57501"/>
        <dbReference type="ChEBI" id="CHEBI:57783"/>
        <dbReference type="ChEBI" id="CHEBI:58349"/>
        <dbReference type="ChEBI" id="CHEBI:78442"/>
        <dbReference type="ChEBI" id="CHEBI:78520"/>
        <dbReference type="EC" id="1.2.1.70"/>
    </reaction>
</comment>
<comment type="pathway">
    <text evidence="1">Porphyrin-containing compound metabolism; protoporphyrin-IX biosynthesis; 5-aminolevulinate from L-glutamyl-tRNA(Glu): step 1/2.</text>
</comment>
<comment type="subunit">
    <text evidence="1">Homodimer.</text>
</comment>
<comment type="domain">
    <text evidence="1">Possesses an unusual extended V-shaped dimeric structure with each monomer consisting of three distinct domains arranged along a curved 'spinal' alpha-helix. The N-terminal catalytic domain specifically recognizes the glutamate moiety of the substrate. The second domain is the NADPH-binding domain, and the third C-terminal domain is responsible for dimerization.</text>
</comment>
<comment type="miscellaneous">
    <text evidence="1">During catalysis, the active site Cys acts as a nucleophile attacking the alpha-carbonyl group of tRNA-bound glutamate with the formation of a thioester intermediate between enzyme and glutamate, and the concomitant release of tRNA(Glu). The thioester intermediate is finally reduced by direct hydride transfer from NADPH, to form the product GSA.</text>
</comment>
<comment type="similarity">
    <text evidence="1">Belongs to the glutamyl-tRNA reductase family.</text>
</comment>
<dbReference type="EC" id="1.2.1.70" evidence="1"/>
<dbReference type="EMBL" id="CP001321">
    <property type="protein sequence ID" value="ACL32378.1"/>
    <property type="molecule type" value="Genomic_DNA"/>
</dbReference>
<dbReference type="RefSeq" id="WP_010786671.1">
    <property type="nucleotide sequence ID" value="NC_011852.1"/>
</dbReference>
<dbReference type="SMR" id="B8F4X6"/>
<dbReference type="STRING" id="557723.HAPS_0733"/>
<dbReference type="KEGG" id="hap:HAPS_0733"/>
<dbReference type="PATRIC" id="fig|557723.8.peg.733"/>
<dbReference type="HOGENOM" id="CLU_035113_2_2_6"/>
<dbReference type="UniPathway" id="UPA00251">
    <property type="reaction ID" value="UER00316"/>
</dbReference>
<dbReference type="Proteomes" id="UP000006743">
    <property type="component" value="Chromosome"/>
</dbReference>
<dbReference type="GO" id="GO:0008883">
    <property type="term" value="F:glutamyl-tRNA reductase activity"/>
    <property type="evidence" value="ECO:0007669"/>
    <property type="project" value="UniProtKB-UniRule"/>
</dbReference>
<dbReference type="GO" id="GO:0050661">
    <property type="term" value="F:NADP binding"/>
    <property type="evidence" value="ECO:0007669"/>
    <property type="project" value="InterPro"/>
</dbReference>
<dbReference type="GO" id="GO:0019353">
    <property type="term" value="P:protoporphyrinogen IX biosynthetic process from glutamate"/>
    <property type="evidence" value="ECO:0007669"/>
    <property type="project" value="TreeGrafter"/>
</dbReference>
<dbReference type="CDD" id="cd05213">
    <property type="entry name" value="NAD_bind_Glutamyl_tRNA_reduct"/>
    <property type="match status" value="1"/>
</dbReference>
<dbReference type="FunFam" id="3.30.460.30:FF:000001">
    <property type="entry name" value="Glutamyl-tRNA reductase"/>
    <property type="match status" value="1"/>
</dbReference>
<dbReference type="FunFam" id="3.40.50.720:FF:000031">
    <property type="entry name" value="Glutamyl-tRNA reductase"/>
    <property type="match status" value="1"/>
</dbReference>
<dbReference type="Gene3D" id="3.30.460.30">
    <property type="entry name" value="Glutamyl-tRNA reductase, N-terminal domain"/>
    <property type="match status" value="1"/>
</dbReference>
<dbReference type="Gene3D" id="3.40.50.720">
    <property type="entry name" value="NAD(P)-binding Rossmann-like Domain"/>
    <property type="match status" value="1"/>
</dbReference>
<dbReference type="HAMAP" id="MF_00087">
    <property type="entry name" value="Glu_tRNA_reductase"/>
    <property type="match status" value="1"/>
</dbReference>
<dbReference type="InterPro" id="IPR000343">
    <property type="entry name" value="4pyrrol_synth_GluRdtase"/>
</dbReference>
<dbReference type="InterPro" id="IPR015896">
    <property type="entry name" value="4pyrrol_synth_GluRdtase_dimer"/>
</dbReference>
<dbReference type="InterPro" id="IPR015895">
    <property type="entry name" value="4pyrrol_synth_GluRdtase_N"/>
</dbReference>
<dbReference type="InterPro" id="IPR018214">
    <property type="entry name" value="GluRdtase_CS"/>
</dbReference>
<dbReference type="InterPro" id="IPR036453">
    <property type="entry name" value="GluRdtase_dimer_dom_sf"/>
</dbReference>
<dbReference type="InterPro" id="IPR036343">
    <property type="entry name" value="GluRdtase_N_sf"/>
</dbReference>
<dbReference type="InterPro" id="IPR036291">
    <property type="entry name" value="NAD(P)-bd_dom_sf"/>
</dbReference>
<dbReference type="InterPro" id="IPR006151">
    <property type="entry name" value="Shikm_DH/Glu-tRNA_Rdtase"/>
</dbReference>
<dbReference type="NCBIfam" id="TIGR01035">
    <property type="entry name" value="hemA"/>
    <property type="match status" value="1"/>
</dbReference>
<dbReference type="PANTHER" id="PTHR43013">
    <property type="entry name" value="GLUTAMYL-TRNA REDUCTASE"/>
    <property type="match status" value="1"/>
</dbReference>
<dbReference type="PANTHER" id="PTHR43013:SF1">
    <property type="entry name" value="GLUTAMYL-TRNA REDUCTASE"/>
    <property type="match status" value="1"/>
</dbReference>
<dbReference type="Pfam" id="PF00745">
    <property type="entry name" value="GlutR_dimer"/>
    <property type="match status" value="1"/>
</dbReference>
<dbReference type="Pfam" id="PF05201">
    <property type="entry name" value="GlutR_N"/>
    <property type="match status" value="1"/>
</dbReference>
<dbReference type="Pfam" id="PF01488">
    <property type="entry name" value="Shikimate_DH"/>
    <property type="match status" value="1"/>
</dbReference>
<dbReference type="PIRSF" id="PIRSF000445">
    <property type="entry name" value="4pyrrol_synth_GluRdtase"/>
    <property type="match status" value="1"/>
</dbReference>
<dbReference type="SUPFAM" id="SSF69742">
    <property type="entry name" value="Glutamyl tRNA-reductase catalytic, N-terminal domain"/>
    <property type="match status" value="1"/>
</dbReference>
<dbReference type="SUPFAM" id="SSF69075">
    <property type="entry name" value="Glutamyl tRNA-reductase dimerization domain"/>
    <property type="match status" value="1"/>
</dbReference>
<dbReference type="SUPFAM" id="SSF51735">
    <property type="entry name" value="NAD(P)-binding Rossmann-fold domains"/>
    <property type="match status" value="1"/>
</dbReference>
<dbReference type="PROSITE" id="PS00747">
    <property type="entry name" value="GLUTR"/>
    <property type="match status" value="1"/>
</dbReference>
<keyword id="KW-0521">NADP</keyword>
<keyword id="KW-0560">Oxidoreductase</keyword>
<keyword id="KW-0627">Porphyrin biosynthesis</keyword>
<keyword id="KW-1185">Reference proteome</keyword>
<sequence length="435" mass="49238">MTILALGINHKTASVSLREKVAFVEDKRQRAFEQIRDQSLAESVVILSTCNRTELYFHQPKIPPQEEHPDNIAWREQCFNWFAEIHQLDKEELSEAYYFKQNLEAARHLMSVACGLDSLILGEPQILGQVKQAYQESEEFYHSQGSGVSTNLSRLFQKTFATAKRVRSETEIGSSAVSVAYAACGLARQIFDDFTKLRFLLVGAGETIELVARHLINHGAKNIMIANRTHIRAEMLAVKLDIPMQILSLSALQIGLNQADVVICSTGSPDILITKEMVEQAQKQRRFDPMLLIDIAVPRDIDEKAGELDSIYAYSVDDLQNIIQQNIAQRQQAAEQAKEIVIEEAKDFFVWLKQQQSTNLIKHYRQNAEEIRLDLLEKALSALQQGQDCEKVLNELSYKLTNQLLHIPTQALQAMAKNSNVKGLQSFSKALKLEE</sequence>
<gene>
    <name evidence="1" type="primary">hemA</name>
    <name type="ordered locus">HAPS_0733</name>
</gene>
<feature type="chain" id="PRO_1000190531" description="Glutamyl-tRNA reductase">
    <location>
        <begin position="1"/>
        <end position="435"/>
    </location>
</feature>
<feature type="active site" description="Nucleophile" evidence="1">
    <location>
        <position position="50"/>
    </location>
</feature>
<feature type="binding site" evidence="1">
    <location>
        <begin position="49"/>
        <end position="52"/>
    </location>
    <ligand>
        <name>substrate</name>
    </ligand>
</feature>
<feature type="binding site" evidence="1">
    <location>
        <position position="118"/>
    </location>
    <ligand>
        <name>substrate</name>
    </ligand>
</feature>
<feature type="binding site" evidence="1">
    <location>
        <begin position="123"/>
        <end position="125"/>
    </location>
    <ligand>
        <name>substrate</name>
    </ligand>
</feature>
<feature type="binding site" evidence="1">
    <location>
        <position position="129"/>
    </location>
    <ligand>
        <name>substrate</name>
    </ligand>
</feature>
<feature type="binding site" evidence="1">
    <location>
        <begin position="203"/>
        <end position="208"/>
    </location>
    <ligand>
        <name>NADP(+)</name>
        <dbReference type="ChEBI" id="CHEBI:58349"/>
    </ligand>
</feature>
<feature type="site" description="Important for activity" evidence="1">
    <location>
        <position position="108"/>
    </location>
</feature>